<organism>
    <name type="scientific">Gallus gallus</name>
    <name type="common">Chicken</name>
    <dbReference type="NCBI Taxonomy" id="9031"/>
    <lineage>
        <taxon>Eukaryota</taxon>
        <taxon>Metazoa</taxon>
        <taxon>Chordata</taxon>
        <taxon>Craniata</taxon>
        <taxon>Vertebrata</taxon>
        <taxon>Euteleostomi</taxon>
        <taxon>Archelosauria</taxon>
        <taxon>Archosauria</taxon>
        <taxon>Dinosauria</taxon>
        <taxon>Saurischia</taxon>
        <taxon>Theropoda</taxon>
        <taxon>Coelurosauria</taxon>
        <taxon>Aves</taxon>
        <taxon>Neognathae</taxon>
        <taxon>Galloanserae</taxon>
        <taxon>Galliformes</taxon>
        <taxon>Phasianidae</taxon>
        <taxon>Phasianinae</taxon>
        <taxon>Gallus</taxon>
    </lineage>
</organism>
<dbReference type="EMBL" id="J02579">
    <property type="protein sequence ID" value="AAA48825.1"/>
    <property type="molecule type" value="Genomic_DNA"/>
</dbReference>
<dbReference type="PIR" id="A25646">
    <property type="entry name" value="A25646"/>
</dbReference>
<dbReference type="RefSeq" id="NP_001006686.1">
    <property type="nucleotide sequence ID" value="NM_001006685.1"/>
</dbReference>
<dbReference type="SMR" id="P08106"/>
<dbReference type="BioGRID" id="684024">
    <property type="interactions" value="6"/>
</dbReference>
<dbReference type="FunCoup" id="P08106">
    <property type="interactions" value="2278"/>
</dbReference>
<dbReference type="IntAct" id="P08106">
    <property type="interactions" value="2"/>
</dbReference>
<dbReference type="PaxDb" id="9031-ENSGALP00000019120"/>
<dbReference type="GeneID" id="423504"/>
<dbReference type="KEGG" id="gga:423504"/>
<dbReference type="CTD" id="3306"/>
<dbReference type="VEuPathDB" id="HostDB:geneid_423504"/>
<dbReference type="eggNOG" id="KOG0101">
    <property type="taxonomic scope" value="Eukaryota"/>
</dbReference>
<dbReference type="InParanoid" id="P08106"/>
<dbReference type="OMA" id="SYAYNIK"/>
<dbReference type="OrthoDB" id="2401965at2759"/>
<dbReference type="PRO" id="PR:P08106"/>
<dbReference type="Proteomes" id="UP000000539">
    <property type="component" value="Unassembled WGS sequence"/>
</dbReference>
<dbReference type="GO" id="GO:0005737">
    <property type="term" value="C:cytoplasm"/>
    <property type="evidence" value="ECO:0000314"/>
    <property type="project" value="AgBase"/>
</dbReference>
<dbReference type="GO" id="GO:0005829">
    <property type="term" value="C:cytosol"/>
    <property type="evidence" value="ECO:0000314"/>
    <property type="project" value="AgBase"/>
</dbReference>
<dbReference type="GO" id="GO:0005634">
    <property type="term" value="C:nucleus"/>
    <property type="evidence" value="ECO:0000314"/>
    <property type="project" value="AgBase"/>
</dbReference>
<dbReference type="GO" id="GO:0043204">
    <property type="term" value="C:perikaryon"/>
    <property type="evidence" value="ECO:0000314"/>
    <property type="project" value="AgBase"/>
</dbReference>
<dbReference type="GO" id="GO:0005886">
    <property type="term" value="C:plasma membrane"/>
    <property type="evidence" value="ECO:0000318"/>
    <property type="project" value="GO_Central"/>
</dbReference>
<dbReference type="GO" id="GO:0043235">
    <property type="term" value="C:receptor complex"/>
    <property type="evidence" value="ECO:0000314"/>
    <property type="project" value="AgBase"/>
</dbReference>
<dbReference type="GO" id="GO:0005524">
    <property type="term" value="F:ATP binding"/>
    <property type="evidence" value="ECO:0000314"/>
    <property type="project" value="AgBase"/>
</dbReference>
<dbReference type="GO" id="GO:0016887">
    <property type="term" value="F:ATP hydrolysis activity"/>
    <property type="evidence" value="ECO:0000318"/>
    <property type="project" value="GO_Central"/>
</dbReference>
<dbReference type="GO" id="GO:0140662">
    <property type="term" value="F:ATP-dependent protein folding chaperone"/>
    <property type="evidence" value="ECO:0007669"/>
    <property type="project" value="InterPro"/>
</dbReference>
<dbReference type="GO" id="GO:0031072">
    <property type="term" value="F:heat shock protein binding"/>
    <property type="evidence" value="ECO:0000318"/>
    <property type="project" value="GO_Central"/>
</dbReference>
<dbReference type="GO" id="GO:0033142">
    <property type="term" value="F:nuclear progesterone receptor binding"/>
    <property type="evidence" value="ECO:0000353"/>
    <property type="project" value="AgBase"/>
</dbReference>
<dbReference type="GO" id="GO:0044183">
    <property type="term" value="F:protein folding chaperone"/>
    <property type="evidence" value="ECO:0000318"/>
    <property type="project" value="GO_Central"/>
</dbReference>
<dbReference type="GO" id="GO:0051085">
    <property type="term" value="P:chaperone cofactor-dependent protein refolding"/>
    <property type="evidence" value="ECO:0000318"/>
    <property type="project" value="GO_Central"/>
</dbReference>
<dbReference type="GO" id="GO:0042026">
    <property type="term" value="P:protein refolding"/>
    <property type="evidence" value="ECO:0000318"/>
    <property type="project" value="GO_Central"/>
</dbReference>
<dbReference type="GO" id="GO:0009409">
    <property type="term" value="P:response to cold"/>
    <property type="evidence" value="ECO:0000314"/>
    <property type="project" value="AgBase"/>
</dbReference>
<dbReference type="GO" id="GO:0009408">
    <property type="term" value="P:response to heat"/>
    <property type="evidence" value="ECO:0000314"/>
    <property type="project" value="AgBase"/>
</dbReference>
<dbReference type="GO" id="GO:0032570">
    <property type="term" value="P:response to progesterone"/>
    <property type="evidence" value="ECO:0000314"/>
    <property type="project" value="AgBase"/>
</dbReference>
<dbReference type="CDD" id="cd10233">
    <property type="entry name" value="ASKHA_NBD_HSP70_HSPA1"/>
    <property type="match status" value="1"/>
</dbReference>
<dbReference type="FunFam" id="2.60.34.10:FF:000002">
    <property type="entry name" value="Heat shock 70 kDa"/>
    <property type="match status" value="1"/>
</dbReference>
<dbReference type="FunFam" id="3.30.420.40:FF:000172">
    <property type="entry name" value="Heat shock 70 kDa protein"/>
    <property type="match status" value="1"/>
</dbReference>
<dbReference type="FunFam" id="1.20.1270.10:FF:000010">
    <property type="entry name" value="Heat shock 70 kDa protein 2"/>
    <property type="match status" value="1"/>
</dbReference>
<dbReference type="FunFam" id="3.30.30.30:FF:000001">
    <property type="entry name" value="heat shock 70 kDa protein-like"/>
    <property type="match status" value="1"/>
</dbReference>
<dbReference type="FunFam" id="3.30.420.40:FF:000028">
    <property type="entry name" value="heat shock 70 kDa protein-like"/>
    <property type="match status" value="1"/>
</dbReference>
<dbReference type="FunFam" id="3.30.420.40:FF:000135">
    <property type="entry name" value="Heat shock cognate 71 kDa protein"/>
    <property type="match status" value="1"/>
</dbReference>
<dbReference type="FunFam" id="3.90.640.10:FF:000134">
    <property type="entry name" value="Heat shock cognate 71 kDa protein"/>
    <property type="match status" value="1"/>
</dbReference>
<dbReference type="FunFam" id="3.30.420.40:FF:000026">
    <property type="entry name" value="Heat shock protein 70"/>
    <property type="match status" value="1"/>
</dbReference>
<dbReference type="Gene3D" id="1.20.1270.10">
    <property type="match status" value="1"/>
</dbReference>
<dbReference type="Gene3D" id="3.30.30.30">
    <property type="match status" value="1"/>
</dbReference>
<dbReference type="Gene3D" id="3.30.420.40">
    <property type="match status" value="2"/>
</dbReference>
<dbReference type="Gene3D" id="3.90.640.10">
    <property type="entry name" value="Actin, Chain A, domain 4"/>
    <property type="match status" value="1"/>
</dbReference>
<dbReference type="Gene3D" id="2.60.34.10">
    <property type="entry name" value="Substrate Binding Domain Of DNAk, Chain A, domain 1"/>
    <property type="match status" value="1"/>
</dbReference>
<dbReference type="InterPro" id="IPR043129">
    <property type="entry name" value="ATPase_NBD"/>
</dbReference>
<dbReference type="InterPro" id="IPR018181">
    <property type="entry name" value="Heat_shock_70_CS"/>
</dbReference>
<dbReference type="InterPro" id="IPR029048">
    <property type="entry name" value="HSP70_C_sf"/>
</dbReference>
<dbReference type="InterPro" id="IPR029047">
    <property type="entry name" value="HSP70_peptide-bd_sf"/>
</dbReference>
<dbReference type="InterPro" id="IPR013126">
    <property type="entry name" value="Hsp_70_fam"/>
</dbReference>
<dbReference type="NCBIfam" id="NF001413">
    <property type="entry name" value="PRK00290.1"/>
    <property type="match status" value="1"/>
</dbReference>
<dbReference type="PANTHER" id="PTHR19375">
    <property type="entry name" value="HEAT SHOCK PROTEIN 70KDA"/>
    <property type="match status" value="1"/>
</dbReference>
<dbReference type="Pfam" id="PF00012">
    <property type="entry name" value="HSP70"/>
    <property type="match status" value="1"/>
</dbReference>
<dbReference type="PRINTS" id="PR00301">
    <property type="entry name" value="HEATSHOCK70"/>
</dbReference>
<dbReference type="SUPFAM" id="SSF53067">
    <property type="entry name" value="Actin-like ATPase domain"/>
    <property type="match status" value="2"/>
</dbReference>
<dbReference type="SUPFAM" id="SSF100934">
    <property type="entry name" value="Heat shock protein 70kD (HSP70), C-terminal subdomain"/>
    <property type="match status" value="1"/>
</dbReference>
<dbReference type="SUPFAM" id="SSF100920">
    <property type="entry name" value="Heat shock protein 70kD (HSP70), peptide-binding domain"/>
    <property type="match status" value="1"/>
</dbReference>
<dbReference type="PROSITE" id="PS00297">
    <property type="entry name" value="HSP70_1"/>
    <property type="match status" value="1"/>
</dbReference>
<dbReference type="PROSITE" id="PS00329">
    <property type="entry name" value="HSP70_2"/>
    <property type="match status" value="1"/>
</dbReference>
<dbReference type="PROSITE" id="PS01036">
    <property type="entry name" value="HSP70_3"/>
    <property type="match status" value="1"/>
</dbReference>
<accession>P08106</accession>
<keyword id="KW-0067">ATP-binding</keyword>
<keyword id="KW-0547">Nucleotide-binding</keyword>
<keyword id="KW-1185">Reference proteome</keyword>
<keyword id="KW-0346">Stress response</keyword>
<protein>
    <recommendedName>
        <fullName>Heat shock 70 kDa protein</fullName>
        <shortName>HSP70</shortName>
    </recommendedName>
</protein>
<feature type="chain" id="PRO_0000078279" description="Heat shock 70 kDa protein">
    <location>
        <begin position="1"/>
        <end position="634"/>
    </location>
</feature>
<feature type="region of interest" description="Nucleotide-binding domain (NBD)" evidence="2">
    <location>
        <begin position="3"/>
        <end position="389"/>
    </location>
</feature>
<feature type="region of interest" description="Substrate-binding domain (SBD)" evidence="2">
    <location>
        <begin position="397"/>
        <end position="512"/>
    </location>
</feature>
<evidence type="ECO:0000250" key="1">
    <source>
        <dbReference type="UniProtKB" id="P0DMV8"/>
    </source>
</evidence>
<evidence type="ECO:0000250" key="2">
    <source>
        <dbReference type="UniProtKB" id="P11142"/>
    </source>
</evidence>
<evidence type="ECO:0000305" key="3"/>
<sequence>MSGKGPAIGIDLGTTYSCVGVFQHGKVEIIANDQGNRTTPSYVAFTDTERLIGDAAKNQVAMNPTNTIFDAKRLIGRKYDDPTVQSDMKHWPFRVVNEGGKPKVQVEYKGEMKTFFPEEISSMVLTKMKEIAEAYLGKKVETAVITVPAYFNDSQRQATKDAGTITGLNVMRIINEPTAAAIAYGLDKKGTRAGEKNVLIFDLGGGTFDVSILTIEDGIFEVKSTAGDTHLGGEDFDNRMVNRFVEEFKGKHKRDNAGNKRAVRRLRTACERARRTLSSSTQASIEIDSLFEGIDFYTSITRARFEELNADLFRGTLEPVEKALRDAKLDKGQIQEIVLVGGSTRIPKIQKLLQDFFNGKELNKSINPDEAVAYGAAVQAAILMGDKSENVQDLLLLDVTPLSLGIETAGGVMTALIKRNTTIPTKQTQTFTTYSDNQSSVLVQVYEGERAMTKDNNLLGKFDLTGIPPAPRGVPQIEVTFDIDANGILNVSAVDKSTGKENKITITNDKGRLSKDDIDRMVQEAEKYKAEDEANRDRVGAKNSLESYTYNMKQTVEDEKLKGKISDQDKQKVLDKCQEVISSLDRNQMAEKEEYEHKQKELEKLCNPIVTKLYQGAGGAGAGGSGGPTIEEVD</sequence>
<reference key="1">
    <citation type="journal article" date="1986" name="J. Biol. Chem.">
        <title>Organization, nucleotide sequence, and transcription of the chicken HSP70 gene.</title>
        <authorList>
            <person name="Morimoto R.I."/>
            <person name="Hunt C."/>
            <person name="Huang S.-Y."/>
            <person name="Berg K.L."/>
            <person name="Banerji S.S."/>
        </authorList>
    </citation>
    <scope>NUCLEOTIDE SEQUENCE [GENOMIC DNA]</scope>
</reference>
<comment type="function">
    <text evidence="1">Molecular chaperone implicated in a wide variety of cellular processes, including protection of the proteome from stress, folding and transport of newly synthesized polypeptides, activation of proteolysis of misfolded proteins and the formation and dissociation of protein complexes. Plays a pivotal role in the protein quality control system, ensuring the correct folding of proteins, the re-folding of misfolded proteins and controlling the targeting of proteins for subsequent degradation. This is achieved through cycles of ATP binding, ATP hydrolysis and ADP release, mediated by co-chaperones. The affinity for polypeptides is regulated by its nucleotide bound state. In the ATP-bound form, it has a low affinity for substrate proteins. However, upon hydrolysis of the ATP to ADP, it undergoes a conformational change that increases its affinity for substrate proteins. It goes through repeated cycles of ATP hydrolysis and nucleotide exchange, which permits cycles of substrate binding and release.</text>
</comment>
<comment type="interaction">
    <interactant intactId="EBI-1636307">
        <id>P08106</id>
    </interactant>
    <interactant intactId="EBI-1635766">
        <id>Q8AYS8</id>
        <label>KCNMA1</label>
    </interactant>
    <organismsDiffer>false</organismsDiffer>
    <experiments>3</experiments>
</comment>
<comment type="interaction">
    <interactant intactId="EBI-1636307">
        <id>P08106</id>
    </interactant>
    <interactant intactId="EBI-10889526">
        <id>Q9DGW5</id>
        <label>MDV005</label>
    </interactant>
    <organismsDiffer>true</organismsDiffer>
    <experiments>5</experiments>
</comment>
<comment type="domain">
    <text evidence="1">The N-terminal nucleotide binding domain (NBD) (also known as the ATPase domain) is responsible for binding and hydrolyzing ATP. The C-terminal substrate-binding domain (SBD) (also known as peptide-binding domain) binds to the client/substrate proteins. The two domains are allosterically coupled so that, when ATP is bound to the NBD, the SBD binds relatively weakly to clients. When ADP is bound in the NBD, a conformational change enhances the affinity of the SBD for client proteins.</text>
</comment>
<comment type="similarity">
    <text evidence="3">Belongs to the heat shock protein 70 family.</text>
</comment>
<name>HSP70_CHICK</name>
<proteinExistence type="evidence at protein level"/>